<evidence type="ECO:0000250" key="1">
    <source>
        <dbReference type="UniProtKB" id="P05318"/>
    </source>
</evidence>
<evidence type="ECO:0000256" key="2">
    <source>
        <dbReference type="SAM" id="MobiDB-lite"/>
    </source>
</evidence>
<evidence type="ECO:0000269" key="3">
    <source>
    </source>
</evidence>
<evidence type="ECO:0000269" key="4">
    <source>
    </source>
</evidence>
<evidence type="ECO:0000269" key="5">
    <source>
    </source>
</evidence>
<evidence type="ECO:0000303" key="6">
    <source>
    </source>
</evidence>
<evidence type="ECO:0000303" key="7">
    <source>
    </source>
</evidence>
<evidence type="ECO:0000303" key="8">
    <source>
    </source>
</evidence>
<evidence type="ECO:0000305" key="9"/>
<evidence type="ECO:0000312" key="10">
    <source>
        <dbReference type="EMBL" id="AAX11194.1"/>
    </source>
</evidence>
<sequence length="107" mass="11066">MSTAELAVSYAALILADDGIEVSADKIQTILGAAKVQEVEPIWATIFAKALEGKDIKEILTNVGSAGPATAGAPAAAGAAAPAEEKKEEKEEEKEESDEDMGFGLFD</sequence>
<comment type="function">
    <text evidence="9">Plays an important role in the elongation step of protein synthesis.</text>
</comment>
<comment type="subunit">
    <text evidence="9">P1 and P2 exist as dimers at the large ribosomal subunit.</text>
</comment>
<comment type="subcellular location">
    <subcellularLocation>
        <location evidence="1">Cytoplasm</location>
    </subcellularLocation>
</comment>
<comment type="allergen">
    <text evidence="3 4 5">Causes an allergic reaction in human (PubMed:16088208, PubMed:19248220, PubMed:23902156). Binds to IgE of patients allergic to mold P.brevicompactum (PubMed:16088208). Binds to IgE in 73% of the 41 Penicillium-sensitive patients tested (PubMed:19248220). Binds to IgE in 87% of the 61 patients tested allergic to Penicillium mold (PubMed:23902156).</text>
</comment>
<comment type="similarity">
    <text evidence="9">Belongs to the eukaryotic ribosomal protein P1/P2 family.</text>
</comment>
<dbReference type="EMBL" id="AY786077">
    <property type="protein sequence ID" value="AAX11194.1"/>
    <property type="molecule type" value="mRNA"/>
</dbReference>
<dbReference type="SMR" id="Q49KL9"/>
<dbReference type="Allergome" id="2486">
    <property type="allergen name" value="Pen b 26"/>
</dbReference>
<dbReference type="Allergome" id="3400">
    <property type="allergen name" value="Pen b 26.0101"/>
</dbReference>
<dbReference type="GO" id="GO:0022625">
    <property type="term" value="C:cytosolic large ribosomal subunit"/>
    <property type="evidence" value="ECO:0000250"/>
    <property type="project" value="UniProtKB"/>
</dbReference>
<dbReference type="GO" id="GO:0030295">
    <property type="term" value="F:protein kinase activator activity"/>
    <property type="evidence" value="ECO:0007669"/>
    <property type="project" value="TreeGrafter"/>
</dbReference>
<dbReference type="GO" id="GO:0043021">
    <property type="term" value="F:ribonucleoprotein complex binding"/>
    <property type="evidence" value="ECO:0007669"/>
    <property type="project" value="TreeGrafter"/>
</dbReference>
<dbReference type="GO" id="GO:0003735">
    <property type="term" value="F:structural constituent of ribosome"/>
    <property type="evidence" value="ECO:0000250"/>
    <property type="project" value="UniProtKB"/>
</dbReference>
<dbReference type="GO" id="GO:0002181">
    <property type="term" value="P:cytoplasmic translation"/>
    <property type="evidence" value="ECO:0000250"/>
    <property type="project" value="UniProtKB"/>
</dbReference>
<dbReference type="GO" id="GO:0006414">
    <property type="term" value="P:translational elongation"/>
    <property type="evidence" value="ECO:0007669"/>
    <property type="project" value="InterPro"/>
</dbReference>
<dbReference type="CDD" id="cd05831">
    <property type="entry name" value="Ribosomal_P1"/>
    <property type="match status" value="1"/>
</dbReference>
<dbReference type="FunFam" id="1.10.10.1410:FF:000001">
    <property type="entry name" value="60S acidic ribosomal protein P1"/>
    <property type="match status" value="1"/>
</dbReference>
<dbReference type="Gene3D" id="1.10.10.1410">
    <property type="match status" value="1"/>
</dbReference>
<dbReference type="HAMAP" id="MF_01478">
    <property type="entry name" value="Ribosomal_L12_arch"/>
    <property type="match status" value="1"/>
</dbReference>
<dbReference type="InterPro" id="IPR038716">
    <property type="entry name" value="P1/P2_N_sf"/>
</dbReference>
<dbReference type="InterPro" id="IPR027534">
    <property type="entry name" value="Ribosomal_P1/P2"/>
</dbReference>
<dbReference type="PANTHER" id="PTHR45696">
    <property type="entry name" value="60S ACIDIC RIBOSOMAL PROTEIN P1"/>
    <property type="match status" value="1"/>
</dbReference>
<dbReference type="PANTHER" id="PTHR45696:SF10">
    <property type="entry name" value="LARGE RIBOSOMAL SUBUNIT PROTEIN P1"/>
    <property type="match status" value="1"/>
</dbReference>
<dbReference type="Pfam" id="PF00428">
    <property type="entry name" value="Ribosomal_60s"/>
    <property type="match status" value="1"/>
</dbReference>
<protein>
    <recommendedName>
        <fullName evidence="9">Large ribosomal subunit protein P1</fullName>
    </recommendedName>
    <alternativeName>
        <fullName evidence="6 7 8">60S acidic ribosomal protein P1</fullName>
    </alternativeName>
    <allergenName evidence="9">Pen b 26.0101</allergenName>
</protein>
<organism evidence="10">
    <name type="scientific">Penicillium brevicompactum</name>
    <dbReference type="NCBI Taxonomy" id="5074"/>
    <lineage>
        <taxon>Eukaryota</taxon>
        <taxon>Fungi</taxon>
        <taxon>Dikarya</taxon>
        <taxon>Ascomycota</taxon>
        <taxon>Pezizomycotina</taxon>
        <taxon>Eurotiomycetes</taxon>
        <taxon>Eurotiomycetidae</taxon>
        <taxon>Eurotiales</taxon>
        <taxon>Aspergillaceae</taxon>
        <taxon>Penicillium</taxon>
    </lineage>
</organism>
<proteinExistence type="evidence at protein level"/>
<accession>Q49KL9</accession>
<keyword id="KW-0020">Allergen</keyword>
<keyword id="KW-0963">Cytoplasm</keyword>
<keyword id="KW-0687">Ribonucleoprotein</keyword>
<keyword id="KW-0689">Ribosomal protein</keyword>
<name>RLA1_PENBR</name>
<reference evidence="10" key="1">
    <citation type="journal article" date="2005" name="Int. Arch. Allergy Immunol.">
        <title>Isolation and characterization of a cDNA clone encoding one IgE-binding fragment of Penicillium brevicompactum.</title>
        <authorList>
            <person name="Sevinc M.S."/>
            <person name="Kumar V."/>
            <person name="Abebe M."/>
            <person name="Casley W.L."/>
            <person name="Vijay H.M."/>
        </authorList>
    </citation>
    <scope>NUCLEOTIDE SEQUENCE [MRNA]</scope>
    <scope>ALLERGEN</scope>
    <source>
        <tissue evidence="6">Mycelium</tissue>
    </source>
</reference>
<reference evidence="10" key="2">
    <citation type="journal article" date="2009" name="Protein Expr. Purif.">
        <title>Expression and characterization of Pen b 26 allergen of Penicillium brevicompactum in Escherichia coli.</title>
        <authorList>
            <person name="Sevinc M.S."/>
            <person name="Kumar V."/>
            <person name="Abebe M."/>
            <person name="Mohottalage S."/>
            <person name="Kumarathasan P."/>
            <person name="Vincent R."/>
            <person name="Vijay H.M."/>
        </authorList>
    </citation>
    <scope>ALLERGEN</scope>
</reference>
<reference key="3">
    <citation type="journal article" date="2013" name="Med. Mycol.">
        <title>Isolation, expression and characterization of a minor allergen from Penicillium crustosum.</title>
        <authorList>
            <person name="Sevinc M.S."/>
            <person name="Kumar V."/>
            <person name="Abebe M."/>
            <person name="Lemieux M."/>
            <person name="Vijay H.M."/>
        </authorList>
    </citation>
    <scope>ALLERGEN</scope>
</reference>
<feature type="chain" id="PRO_0000447994" description="Large ribosomal subunit protein P1">
    <location>
        <begin position="1"/>
        <end position="107"/>
    </location>
</feature>
<feature type="region of interest" description="Disordered" evidence="2">
    <location>
        <begin position="68"/>
        <end position="107"/>
    </location>
</feature>
<feature type="compositionally biased region" description="Low complexity" evidence="2">
    <location>
        <begin position="68"/>
        <end position="82"/>
    </location>
</feature>
<feature type="compositionally biased region" description="Acidic residues" evidence="2">
    <location>
        <begin position="90"/>
        <end position="101"/>
    </location>
</feature>